<reference key="1">
    <citation type="journal article" date="1987" name="DNA">
        <title>The rainbow trout metallothioneins: molecular cloning and characterization of two distinct cDNA sequences.</title>
        <authorList>
            <person name="Bonham K."/>
            <person name="Zafarullah M."/>
            <person name="Gedamu L."/>
        </authorList>
    </citation>
    <scope>NUCLEOTIDE SEQUENCE [MRNA]</scope>
</reference>
<reference key="2">
    <citation type="journal article" date="1988" name="Mol. Cell. Biol.">
        <title>Structure of the rainbow trout metallothionein B gene and characterization of its metal-responsive region.</title>
        <authorList>
            <person name="Zafarullah M."/>
            <person name="Bonham K."/>
            <person name="Gedamu L."/>
        </authorList>
    </citation>
    <scope>NUCLEOTIDE SEQUENCE [GENOMIC DNA]</scope>
</reference>
<reference key="3">
    <citation type="journal article" date="1991" name="Biochim. Biophys. Acta">
        <title>Elucidation of cDNA sequences for metallothioneins from rainbow trout, stone loach and pike liver using the polymerase chain reaction.</title>
        <authorList>
            <person name="Kille P."/>
            <person name="Stephens P.E."/>
            <person name="Kay J."/>
        </authorList>
    </citation>
    <scope>NUCLEOTIDE SEQUENCE [MRNA]</scope>
    <source>
        <tissue>Liver</tissue>
    </source>
</reference>
<name>MTB_ONCMY</name>
<proteinExistence type="inferred from homology"/>
<sequence length="60" mass="6033">MDPCECSKTGSCNCGGSCKCSNCACTSCKKSCCPCCPSDCSKCASGCVCKGKTCDTSCCQ</sequence>
<gene>
    <name type="primary">mtb</name>
</gene>
<protein>
    <recommendedName>
        <fullName>Metallothionein B</fullName>
        <shortName>MT-B</shortName>
    </recommendedName>
</protein>
<dbReference type="EMBL" id="M18104">
    <property type="protein sequence ID" value="AAA49566.1"/>
    <property type="molecule type" value="mRNA"/>
</dbReference>
<dbReference type="EMBL" id="M22487">
    <property type="protein sequence ID" value="AAA49567.1"/>
    <property type="molecule type" value="Genomic_DNA"/>
</dbReference>
<dbReference type="EMBL" id="X59394">
    <property type="protein sequence ID" value="CAA42037.1"/>
    <property type="molecule type" value="mRNA"/>
</dbReference>
<dbReference type="PIR" id="A30818">
    <property type="entry name" value="B27490"/>
</dbReference>
<dbReference type="SMR" id="P68501"/>
<dbReference type="Ensembl" id="ENSOMYT00000164289.1">
    <property type="protein sequence ID" value="ENSOMYP00000116468.1"/>
    <property type="gene ID" value="ENSOMYG00000072034.1"/>
</dbReference>
<dbReference type="GeneTree" id="ENSGT00950000182967"/>
<dbReference type="Proteomes" id="UP000694395">
    <property type="component" value="Chromosome 2"/>
</dbReference>
<dbReference type="GO" id="GO:0046872">
    <property type="term" value="F:metal ion binding"/>
    <property type="evidence" value="ECO:0007669"/>
    <property type="project" value="UniProtKB-KW"/>
</dbReference>
<dbReference type="GO" id="GO:0046686">
    <property type="term" value="P:response to cadmium ion"/>
    <property type="evidence" value="ECO:0000314"/>
    <property type="project" value="AgBase"/>
</dbReference>
<dbReference type="GO" id="GO:0046688">
    <property type="term" value="P:response to copper ion"/>
    <property type="evidence" value="ECO:0000314"/>
    <property type="project" value="AgBase"/>
</dbReference>
<dbReference type="GO" id="GO:0046689">
    <property type="term" value="P:response to mercury ion"/>
    <property type="evidence" value="ECO:0000314"/>
    <property type="project" value="AgBase"/>
</dbReference>
<dbReference type="GO" id="GO:0010043">
    <property type="term" value="P:response to zinc ion"/>
    <property type="evidence" value="ECO:0000314"/>
    <property type="project" value="AgBase"/>
</dbReference>
<dbReference type="FunFam" id="4.10.10.10:FF:000001">
    <property type="entry name" value="Metallothionein"/>
    <property type="match status" value="1"/>
</dbReference>
<dbReference type="Gene3D" id="4.10.10.10">
    <property type="entry name" value="Metallothionein Isoform II"/>
    <property type="match status" value="1"/>
</dbReference>
<dbReference type="InterPro" id="IPR017854">
    <property type="entry name" value="Metalthion_dom_sf"/>
</dbReference>
<dbReference type="InterPro" id="IPR023587">
    <property type="entry name" value="Metalthion_dom_sf_vert"/>
</dbReference>
<dbReference type="InterPro" id="IPR000006">
    <property type="entry name" value="Metalthion_vert"/>
</dbReference>
<dbReference type="InterPro" id="IPR018064">
    <property type="entry name" value="Metalthion_vert_metal_BS"/>
</dbReference>
<dbReference type="PANTHER" id="PTHR23299">
    <property type="entry name" value="METALLOTHIONEIN"/>
    <property type="match status" value="1"/>
</dbReference>
<dbReference type="PANTHER" id="PTHR23299:SF24">
    <property type="entry name" value="METALLOTHIONEIN-1X"/>
    <property type="match status" value="1"/>
</dbReference>
<dbReference type="Pfam" id="PF00131">
    <property type="entry name" value="Metallothio"/>
    <property type="match status" value="1"/>
</dbReference>
<dbReference type="PRINTS" id="PR00860">
    <property type="entry name" value="MTVERTEBRATE"/>
</dbReference>
<dbReference type="SUPFAM" id="SSF57868">
    <property type="entry name" value="Metallothionein"/>
    <property type="match status" value="1"/>
</dbReference>
<dbReference type="PROSITE" id="PS00203">
    <property type="entry name" value="METALLOTHIONEIN_VRT"/>
    <property type="match status" value="1"/>
</dbReference>
<evidence type="ECO:0000250" key="1"/>
<evidence type="ECO:0000250" key="2">
    <source>
        <dbReference type="UniProtKB" id="P02795"/>
    </source>
</evidence>
<evidence type="ECO:0000250" key="3">
    <source>
        <dbReference type="UniProtKB" id="P62339"/>
    </source>
</evidence>
<evidence type="ECO:0000305" key="4"/>
<comment type="function">
    <text evidence="1">Metallothioneins have a high content of cysteine residues that bind various heavy metals.</text>
</comment>
<comment type="domain">
    <text>Class I metallothioneins contain 2 metal-binding domains: four divalent ions are chelated within cluster A of the alpha domain and are coordinated via cysteinyl thiolate bridges to 11 cysteine ligands. Cluster B, the corresponding region within the beta domain, can ligate three divalent ions to 9 cysteines.</text>
</comment>
<comment type="similarity">
    <text evidence="4">Belongs to the metallothionein superfamily. Type 1 family.</text>
</comment>
<organism>
    <name type="scientific">Oncorhynchus mykiss</name>
    <name type="common">Rainbow trout</name>
    <name type="synonym">Salmo gairdneri</name>
    <dbReference type="NCBI Taxonomy" id="8022"/>
    <lineage>
        <taxon>Eukaryota</taxon>
        <taxon>Metazoa</taxon>
        <taxon>Chordata</taxon>
        <taxon>Craniata</taxon>
        <taxon>Vertebrata</taxon>
        <taxon>Euteleostomi</taxon>
        <taxon>Actinopterygii</taxon>
        <taxon>Neopterygii</taxon>
        <taxon>Teleostei</taxon>
        <taxon>Protacanthopterygii</taxon>
        <taxon>Salmoniformes</taxon>
        <taxon>Salmonidae</taxon>
        <taxon>Salmoninae</taxon>
        <taxon>Oncorhynchus</taxon>
    </lineage>
</organism>
<keyword id="KW-0479">Metal-binding</keyword>
<keyword id="KW-0480">Metal-thiolate cluster</keyword>
<feature type="chain" id="PRO_0000197296" description="Metallothionein B">
    <location>
        <begin position="1"/>
        <end position="60"/>
    </location>
</feature>
<feature type="region of interest" description="Beta">
    <location>
        <begin position="1"/>
        <end position="28"/>
    </location>
</feature>
<feature type="region of interest" description="Alpha">
    <location>
        <begin position="29"/>
        <end position="60"/>
    </location>
</feature>
<feature type="binding site" evidence="2">
    <location>
        <position position="4"/>
    </location>
    <ligand>
        <name>a divalent metal cation</name>
        <dbReference type="ChEBI" id="CHEBI:60240"/>
        <label>1</label>
        <note>in cluster B</note>
    </ligand>
</feature>
<feature type="binding site" evidence="2">
    <location>
        <position position="6"/>
    </location>
    <ligand>
        <name>a divalent metal cation</name>
        <dbReference type="ChEBI" id="CHEBI:60240"/>
        <label>1</label>
        <note>in cluster B</note>
    </ligand>
</feature>
<feature type="binding site" evidence="2">
    <location>
        <position position="6"/>
    </location>
    <ligand>
        <name>a divalent metal cation</name>
        <dbReference type="ChEBI" id="CHEBI:60240"/>
        <label>2</label>
        <note>in cluster B</note>
    </ligand>
</feature>
<feature type="binding site" evidence="2">
    <location>
        <position position="12"/>
    </location>
    <ligand>
        <name>a divalent metal cation</name>
        <dbReference type="ChEBI" id="CHEBI:60240"/>
        <label>2</label>
        <note>in cluster B</note>
    </ligand>
</feature>
<feature type="binding site" evidence="2">
    <location>
        <position position="14"/>
    </location>
    <ligand>
        <name>a divalent metal cation</name>
        <dbReference type="ChEBI" id="CHEBI:60240"/>
        <label>2</label>
        <note>in cluster B</note>
    </ligand>
</feature>
<feature type="binding site" evidence="2">
    <location>
        <position position="14"/>
    </location>
    <ligand>
        <name>a divalent metal cation</name>
        <dbReference type="ChEBI" id="CHEBI:60240"/>
        <label>3</label>
        <note>in cluster B</note>
    </ligand>
</feature>
<feature type="binding site" evidence="2">
    <location>
        <position position="18"/>
    </location>
    <ligand>
        <name>a divalent metal cation</name>
        <dbReference type="ChEBI" id="CHEBI:60240"/>
        <label>3</label>
        <note>in cluster B</note>
    </ligand>
</feature>
<feature type="binding site" evidence="2">
    <location>
        <position position="20"/>
    </location>
    <ligand>
        <name>a divalent metal cation</name>
        <dbReference type="ChEBI" id="CHEBI:60240"/>
        <label>1</label>
        <note>in cluster B</note>
    </ligand>
</feature>
<feature type="binding site" evidence="2">
    <location>
        <position position="23"/>
    </location>
    <ligand>
        <name>a divalent metal cation</name>
        <dbReference type="ChEBI" id="CHEBI:60240"/>
        <label>1</label>
        <note>in cluster B</note>
    </ligand>
</feature>
<feature type="binding site" evidence="2">
    <location>
        <position position="23"/>
    </location>
    <ligand>
        <name>a divalent metal cation</name>
        <dbReference type="ChEBI" id="CHEBI:60240"/>
        <label>3</label>
        <note>in cluster B</note>
    </ligand>
</feature>
<feature type="binding site" evidence="2">
    <location>
        <position position="25"/>
    </location>
    <ligand>
        <name>a divalent metal cation</name>
        <dbReference type="ChEBI" id="CHEBI:60240"/>
        <label>2</label>
        <note>in cluster B</note>
    </ligand>
</feature>
<feature type="binding site" evidence="2">
    <location>
        <position position="28"/>
    </location>
    <ligand>
        <name>a divalent metal cation</name>
        <dbReference type="ChEBI" id="CHEBI:60240"/>
        <label>3</label>
        <note>in cluster B</note>
    </ligand>
</feature>
<feature type="binding site" evidence="2">
    <location>
        <position position="32"/>
    </location>
    <ligand>
        <name>a divalent metal cation</name>
        <dbReference type="ChEBI" id="CHEBI:60240"/>
        <label>4</label>
        <note>in cluster A</note>
    </ligand>
</feature>
<feature type="binding site" evidence="2">
    <location>
        <position position="33"/>
    </location>
    <ligand>
        <name>a divalent metal cation</name>
        <dbReference type="ChEBI" id="CHEBI:60240"/>
        <label>4</label>
        <note>in cluster A</note>
    </ligand>
</feature>
<feature type="binding site" evidence="2">
    <location>
        <position position="33"/>
    </location>
    <ligand>
        <name>a divalent metal cation</name>
        <dbReference type="ChEBI" id="CHEBI:60240"/>
        <label>5</label>
        <note>in cluster A</note>
    </ligand>
</feature>
<feature type="binding site" evidence="2">
    <location>
        <position position="35"/>
    </location>
    <ligand>
        <name>a divalent metal cation</name>
        <dbReference type="ChEBI" id="CHEBI:60240"/>
        <label>5</label>
        <note>in cluster A</note>
    </ligand>
</feature>
<feature type="binding site" evidence="2">
    <location>
        <position position="36"/>
    </location>
    <ligand>
        <name>a divalent metal cation</name>
        <dbReference type="ChEBI" id="CHEBI:60240"/>
        <label>5</label>
        <note>in cluster A</note>
    </ligand>
</feature>
<feature type="binding site" evidence="2">
    <location>
        <position position="36"/>
    </location>
    <ligand>
        <name>a divalent metal cation</name>
        <dbReference type="ChEBI" id="CHEBI:60240"/>
        <label>6</label>
        <note>in cluster A</note>
    </ligand>
</feature>
<feature type="binding site" evidence="2">
    <location>
        <position position="40"/>
    </location>
    <ligand>
        <name>a divalent metal cation</name>
        <dbReference type="ChEBI" id="CHEBI:60240"/>
        <label>6</label>
        <note>in cluster A</note>
    </ligand>
</feature>
<feature type="binding site" evidence="2">
    <location>
        <position position="43"/>
    </location>
    <ligand>
        <name>a divalent metal cation</name>
        <dbReference type="ChEBI" id="CHEBI:60240"/>
        <label>4</label>
        <note>in cluster A</note>
    </ligand>
</feature>
<feature type="binding site" evidence="2">
    <location>
        <position position="43"/>
    </location>
    <ligand>
        <name>a divalent metal cation</name>
        <dbReference type="ChEBI" id="CHEBI:60240"/>
        <label>6</label>
        <note>in cluster A</note>
    </ligand>
</feature>
<feature type="binding site" evidence="2">
    <location>
        <position position="47"/>
    </location>
    <ligand>
        <name>a divalent metal cation</name>
        <dbReference type="ChEBI" id="CHEBI:60240"/>
        <label>4</label>
        <note>in cluster A</note>
    </ligand>
</feature>
<feature type="binding site" evidence="2">
    <location>
        <position position="49"/>
    </location>
    <ligand>
        <name>a divalent metal cation</name>
        <dbReference type="ChEBI" id="CHEBI:60240"/>
        <label>5</label>
        <note>in cluster A</note>
    </ligand>
</feature>
<feature type="binding site" evidence="2">
    <location>
        <position position="49"/>
    </location>
    <ligand>
        <name>a divalent metal cation</name>
        <dbReference type="ChEBI" id="CHEBI:60240"/>
        <label>7</label>
        <note>in cluster A</note>
    </ligand>
</feature>
<feature type="binding site" evidence="3">
    <location>
        <position position="54"/>
    </location>
    <ligand>
        <name>a divalent metal cation</name>
        <dbReference type="ChEBI" id="CHEBI:60240"/>
        <label>7</label>
        <note>in cluster A</note>
    </ligand>
</feature>
<feature type="binding site" evidence="2">
    <location>
        <position position="58"/>
    </location>
    <ligand>
        <name>a divalent metal cation</name>
        <dbReference type="ChEBI" id="CHEBI:60240"/>
        <label>7</label>
        <note>in cluster A</note>
    </ligand>
</feature>
<feature type="binding site" evidence="2">
    <location>
        <position position="59"/>
    </location>
    <ligand>
        <name>a divalent metal cation</name>
        <dbReference type="ChEBI" id="CHEBI:60240"/>
        <label>6</label>
        <note>in cluster A</note>
    </ligand>
</feature>
<feature type="binding site" evidence="2">
    <location>
        <position position="59"/>
    </location>
    <ligand>
        <name>a divalent metal cation</name>
        <dbReference type="ChEBI" id="CHEBI:60240"/>
        <label>7</label>
        <note>in cluster A</note>
    </ligand>
</feature>
<accession>P68501</accession>
<accession>P09862</accession>